<keyword id="KW-0217">Developmental protein</keyword>
<keyword id="KW-1015">Disulfide bond</keyword>
<keyword id="KW-0272">Extracellular matrix</keyword>
<keyword id="KW-0325">Glycoprotein</keyword>
<keyword id="KW-0449">Lipoprotein</keyword>
<keyword id="KW-0964">Secreted</keyword>
<keyword id="KW-0732">Signal</keyword>
<keyword id="KW-0879">Wnt signaling pathway</keyword>
<gene>
    <name type="primary">WNT7A</name>
</gene>
<accession>Q1KYK4</accession>
<feature type="signal peptide" evidence="6">
    <location>
        <begin position="1"/>
        <end position="31"/>
    </location>
</feature>
<feature type="chain" id="PRO_0000245332" description="Protein Wnt-7a">
    <location>
        <begin position="32"/>
        <end position="349"/>
    </location>
</feature>
<feature type="region of interest" description="Disordered linker" evidence="1">
    <location>
        <begin position="238"/>
        <end position="266"/>
    </location>
</feature>
<feature type="lipid moiety-binding region" description="O-palmitoleoyl serine; by PORCN" evidence="5">
    <location>
        <position position="206"/>
    </location>
</feature>
<feature type="glycosylation site" description="N-linked (GlcNAc...) asparagine" evidence="6">
    <location>
        <position position="83"/>
    </location>
</feature>
<feature type="glycosylation site" description="N-linked (GlcNAc...) asparagine" evidence="6">
    <location>
        <position position="127"/>
    </location>
</feature>
<feature type="glycosylation site" description="N-linked (GlcNAc...) asparagine" evidence="6">
    <location>
        <position position="295"/>
    </location>
</feature>
<feature type="disulfide bond" evidence="4">
    <location>
        <begin position="73"/>
        <end position="84"/>
    </location>
</feature>
<feature type="disulfide bond" evidence="4">
    <location>
        <begin position="123"/>
        <end position="131"/>
    </location>
</feature>
<feature type="disulfide bond" evidence="4">
    <location>
        <begin position="133"/>
        <end position="152"/>
    </location>
</feature>
<feature type="disulfide bond" evidence="4">
    <location>
        <begin position="200"/>
        <end position="214"/>
    </location>
</feature>
<feature type="disulfide bond" evidence="4">
    <location>
        <begin position="202"/>
        <end position="209"/>
    </location>
</feature>
<feature type="disulfide bond" evidence="4">
    <location>
        <begin position="278"/>
        <end position="309"/>
    </location>
</feature>
<feature type="disulfide bond" evidence="4">
    <location>
        <begin position="294"/>
        <end position="304"/>
    </location>
</feature>
<feature type="disulfide bond" evidence="4">
    <location>
        <begin position="308"/>
        <end position="348"/>
    </location>
</feature>
<feature type="disulfide bond" evidence="4">
    <location>
        <begin position="324"/>
        <end position="339"/>
    </location>
</feature>
<feature type="disulfide bond" evidence="4">
    <location>
        <begin position="326"/>
        <end position="336"/>
    </location>
</feature>
<feature type="disulfide bond" evidence="4">
    <location>
        <begin position="331"/>
        <end position="332"/>
    </location>
</feature>
<reference key="1">
    <citation type="submission" date="2006-01" db="EMBL/GenBank/DDBJ databases">
        <title>WNT7A and limb development.</title>
        <authorList>
            <person name="Stern R."/>
            <person name="Cox J."/>
            <person name="Nicholas A."/>
            <person name="Al-Gazali L."/>
            <person name="Woods G."/>
        </authorList>
    </citation>
    <scope>NUCLEOTIDE SEQUENCE [GENOMIC DNA]</scope>
</reference>
<protein>
    <recommendedName>
        <fullName>Protein Wnt-7a</fullName>
    </recommendedName>
</protein>
<comment type="function">
    <text evidence="1 2">Ligand for members of the frizzled family of seven transmembrane receptors that functions in the canonical Wnt/beta-catenin signaling pathway (By similarity). Plays an important role in embryonic development, including dorsal versus ventral patterning during limb development, skeleton development and urogenital tract development. Required for central nervous system (CNS) angiogenesis and blood-brain barrier regulation (By similarity). Required for normal, sexually dimorphic development of the Mullerian ducts, and for normal fertility in both sexes. Required for normal neural stem cell proliferation in the hippocampus dentate gyrus. Required for normal progress through the cell cycle in neural progenitor cells, for self-renewal of neural stem cells, and for normal neuronal differentiation and maturation. Promotes formation of synapses via its interaction with FZD5 (By similarity).</text>
</comment>
<comment type="subunit">
    <text evidence="1 2">Forms a soluble 1:1 complex with AFM; this prevents oligomerization and is required for prolonged biological activity. The complex with AFM may represent the physiological form in body fluids (By similarity). Interacts with PORCN (By similarity). Interacts (via intrinsically disordered linker region) with RECK; interaction with RECK confers ligand selectivity for Wnt7 in brain endothelial cells and allows these cells to selectively respond to Wnt7 (By similarity). Interacts with FZD5 (By similarity).</text>
</comment>
<comment type="subcellular location">
    <subcellularLocation>
        <location evidence="2">Secreted</location>
        <location evidence="2">Extracellular space</location>
        <location evidence="2">Extracellular matrix</location>
    </subcellularLocation>
    <subcellularLocation>
        <location evidence="2">Secreted</location>
    </subcellularLocation>
</comment>
<comment type="domain">
    <text evidence="1">The intrinsically disordered linker region is required for recognition by RECK in brain endothelial cells.</text>
</comment>
<comment type="PTM">
    <text evidence="3 5">Palmitoleoylation is required for efficient binding to frizzled receptors. Depalmitoleoylation leads to Wnt signaling pathway inhibition.</text>
</comment>
<comment type="similarity">
    <text evidence="7">Belongs to the Wnt family.</text>
</comment>
<sequence>MNRKARRCLGHLFLSLGMVYLRIGGFSSVVALGASIICNKIPGLAPRQRAICQSRPDAIIVIGEGSQMGLDECQFQFRNGRWNCSALGERTVFGKELKVGSREAAFTYAIIAAGVAHAITAACTQGNLSDCGCDKEKQGQYHRDEGWKWGGCSADIRYGIGFAKVFVDAREIKQNARTLMNLHNNEAGRKILEENMKLECKCHGVSGSCTTKTCWTTLPQFRELGYVLKDKYNEAVHVEPVRASRNKRPTFLKIKKPLSYRKPMDTDLVYIEKSPNYCEEDPVTGSVGTQGRACNKTAPQASGCDLMCCGRGYNTHQYARVWQCNCKFHWCCYVKCNTCSERTEMYTCK</sequence>
<proteinExistence type="inferred from homology"/>
<name>WNT7A_AOTTR</name>
<organism>
    <name type="scientific">Aotus trivirgatus</name>
    <name type="common">Three-striped night monkey</name>
    <name type="synonym">Douroucouli</name>
    <dbReference type="NCBI Taxonomy" id="9505"/>
    <lineage>
        <taxon>Eukaryota</taxon>
        <taxon>Metazoa</taxon>
        <taxon>Chordata</taxon>
        <taxon>Craniata</taxon>
        <taxon>Vertebrata</taxon>
        <taxon>Euteleostomi</taxon>
        <taxon>Mammalia</taxon>
        <taxon>Eutheria</taxon>
        <taxon>Euarchontoglires</taxon>
        <taxon>Primates</taxon>
        <taxon>Haplorrhini</taxon>
        <taxon>Platyrrhini</taxon>
        <taxon>Aotidae</taxon>
        <taxon>Aotus</taxon>
    </lineage>
</organism>
<evidence type="ECO:0000250" key="1">
    <source>
        <dbReference type="UniProtKB" id="O00755"/>
    </source>
</evidence>
<evidence type="ECO:0000250" key="2">
    <source>
        <dbReference type="UniProtKB" id="P24383"/>
    </source>
</evidence>
<evidence type="ECO:0000250" key="3">
    <source>
        <dbReference type="UniProtKB" id="P27467"/>
    </source>
</evidence>
<evidence type="ECO:0000250" key="4">
    <source>
        <dbReference type="UniProtKB" id="P28026"/>
    </source>
</evidence>
<evidence type="ECO:0000250" key="5">
    <source>
        <dbReference type="UniProtKB" id="P56704"/>
    </source>
</evidence>
<evidence type="ECO:0000255" key="6"/>
<evidence type="ECO:0000305" key="7"/>
<dbReference type="EMBL" id="DQ367077">
    <property type="protein sequence ID" value="ABE73779.1"/>
    <property type="molecule type" value="Genomic_DNA"/>
</dbReference>
<dbReference type="SMR" id="Q1KYK4"/>
<dbReference type="GlyCosmos" id="Q1KYK4">
    <property type="glycosylation" value="3 sites, No reported glycans"/>
</dbReference>
<dbReference type="GO" id="GO:0005615">
    <property type="term" value="C:extracellular space"/>
    <property type="evidence" value="ECO:0007669"/>
    <property type="project" value="TreeGrafter"/>
</dbReference>
<dbReference type="GO" id="GO:0005125">
    <property type="term" value="F:cytokine activity"/>
    <property type="evidence" value="ECO:0007669"/>
    <property type="project" value="TreeGrafter"/>
</dbReference>
<dbReference type="GO" id="GO:0005109">
    <property type="term" value="F:frizzled binding"/>
    <property type="evidence" value="ECO:0007669"/>
    <property type="project" value="TreeGrafter"/>
</dbReference>
<dbReference type="GO" id="GO:0048513">
    <property type="term" value="P:animal organ development"/>
    <property type="evidence" value="ECO:0007669"/>
    <property type="project" value="UniProtKB-ARBA"/>
</dbReference>
<dbReference type="GO" id="GO:0060070">
    <property type="term" value="P:canonical Wnt signaling pathway"/>
    <property type="evidence" value="ECO:0007669"/>
    <property type="project" value="TreeGrafter"/>
</dbReference>
<dbReference type="GO" id="GO:0045165">
    <property type="term" value="P:cell fate commitment"/>
    <property type="evidence" value="ECO:0007669"/>
    <property type="project" value="TreeGrafter"/>
</dbReference>
<dbReference type="GO" id="GO:0030182">
    <property type="term" value="P:neuron differentiation"/>
    <property type="evidence" value="ECO:0007669"/>
    <property type="project" value="TreeGrafter"/>
</dbReference>
<dbReference type="GO" id="GO:0046330">
    <property type="term" value="P:positive regulation of JNK cascade"/>
    <property type="evidence" value="ECO:0007669"/>
    <property type="project" value="TreeGrafter"/>
</dbReference>
<dbReference type="GO" id="GO:0009888">
    <property type="term" value="P:tissue development"/>
    <property type="evidence" value="ECO:0007669"/>
    <property type="project" value="UniProtKB-ARBA"/>
</dbReference>
<dbReference type="CDD" id="cd19349">
    <property type="entry name" value="Wnt_Wnt7a"/>
    <property type="match status" value="1"/>
</dbReference>
<dbReference type="FunFam" id="3.30.2460.20:FF:000001">
    <property type="entry name" value="Wnt homolog"/>
    <property type="match status" value="1"/>
</dbReference>
<dbReference type="Gene3D" id="3.30.2460.20">
    <property type="match status" value="1"/>
</dbReference>
<dbReference type="InterPro" id="IPR005817">
    <property type="entry name" value="Wnt"/>
</dbReference>
<dbReference type="InterPro" id="IPR013300">
    <property type="entry name" value="Wnt7"/>
</dbReference>
<dbReference type="InterPro" id="IPR043158">
    <property type="entry name" value="Wnt_C"/>
</dbReference>
<dbReference type="InterPro" id="IPR018161">
    <property type="entry name" value="Wnt_CS"/>
</dbReference>
<dbReference type="PANTHER" id="PTHR12027:SF78">
    <property type="entry name" value="PROTEIN WNT-7A"/>
    <property type="match status" value="1"/>
</dbReference>
<dbReference type="PANTHER" id="PTHR12027">
    <property type="entry name" value="WNT RELATED"/>
    <property type="match status" value="1"/>
</dbReference>
<dbReference type="Pfam" id="PF00110">
    <property type="entry name" value="wnt"/>
    <property type="match status" value="1"/>
</dbReference>
<dbReference type="PRINTS" id="PR01891">
    <property type="entry name" value="WNT7PROTEIN"/>
</dbReference>
<dbReference type="PRINTS" id="PR01349">
    <property type="entry name" value="WNTPROTEIN"/>
</dbReference>
<dbReference type="SMART" id="SM00097">
    <property type="entry name" value="WNT1"/>
    <property type="match status" value="1"/>
</dbReference>
<dbReference type="PROSITE" id="PS00246">
    <property type="entry name" value="WNT1"/>
    <property type="match status" value="1"/>
</dbReference>